<accession>Q76ZQ3</accession>
<organism>
    <name type="scientific">Vaccinia virus (strain Western Reserve)</name>
    <name type="common">VACV</name>
    <name type="synonym">Vaccinia virus (strain WR)</name>
    <dbReference type="NCBI Taxonomy" id="10254"/>
    <lineage>
        <taxon>Viruses</taxon>
        <taxon>Varidnaviria</taxon>
        <taxon>Bamfordvirae</taxon>
        <taxon>Nucleocytoviricota</taxon>
        <taxon>Pokkesviricetes</taxon>
        <taxon>Chitovirales</taxon>
        <taxon>Poxviridae</taxon>
        <taxon>Chordopoxvirinae</taxon>
        <taxon>Orthopoxvirus</taxon>
        <taxon>Vaccinia virus</taxon>
    </lineage>
</organism>
<gene>
    <name type="primary">OPG140</name>
    <name type="ORF">A14L</name>
</gene>
<reference key="1">
    <citation type="submission" date="2003-02" db="EMBL/GenBank/DDBJ databases">
        <title>Sequencing of the coding region of Vaccinia-WR to an average 9-fold redundancy and an error rate of 0.16/10kb.</title>
        <authorList>
            <person name="Esposito J.J."/>
            <person name="Frace A.M."/>
            <person name="Sammons S.A."/>
            <person name="Olsen-Rasmussen M."/>
            <person name="Osborne J."/>
            <person name="Wohlhueter R."/>
        </authorList>
    </citation>
    <scope>NUCLEOTIDE SEQUENCE [LARGE SCALE GENOMIC DNA]</scope>
</reference>
<reference key="2">
    <citation type="journal article" date="2007" name="Virol. J.">
        <title>Characterization of vaccinia virus A12L protein proteolysis and its participation in virus assembly.</title>
        <authorList>
            <person name="Yang S.J."/>
        </authorList>
    </citation>
    <scope>PROTEIN SEQUENCE OF 1-9</scope>
</reference>
<reference key="3">
    <citation type="journal article" date="1998" name="J. Virol.">
        <title>Vaccinia virus 15-kilodalton (A14L) protein is essential for assembly and attachment of viral crescents to virosomes.</title>
        <authorList>
            <person name="Rodriguez J.R."/>
            <person name="Risco C."/>
            <person name="Carrascosa J.L."/>
            <person name="Esteban M."/>
            <person name="Rodriguez D."/>
        </authorList>
    </citation>
    <scope>FUNCTION</scope>
</reference>
<reference key="4">
    <citation type="journal article" date="1999" name="J. Virol.">
        <title>Regulation of vaccinia virus morphogenesis: phosphorylation of the A14L and A17L membrane proteins and C-terminal truncation of the A17L protein are dependent on the F10L kinase.</title>
        <authorList>
            <person name="Betakova T."/>
            <person name="Wolffe E.J."/>
            <person name="Moss B."/>
        </authorList>
    </citation>
    <scope>PHOSPHORYLATION</scope>
    <scope>INTERACTION WITH OPG144</scope>
</reference>
<reference key="5">
    <citation type="journal article" date="2000" name="J. Virol.">
        <title>Elucidating the essential role of the A14 phosphoprotein in vaccinia virus morphogenesis: construction and characterization of a tetracycline-inducible recombinant.</title>
        <authorList>
            <person name="Traktman P."/>
            <person name="Liu K."/>
            <person name="DeMasi J."/>
            <person name="Rollins R."/>
            <person name="Jesty S."/>
            <person name="Unger B."/>
        </authorList>
    </citation>
    <scope>FUNCTION</scope>
    <scope>SUBCELLULAR LOCATION</scope>
</reference>
<reference key="6">
    <citation type="journal article" date="2003" name="J. Virol.">
        <title>Investigation of structural and functional motifs within the vaccinia virus A14 phosphoprotein, an essential component of the virion membrane.</title>
        <authorList>
            <person name="Mercer J."/>
            <person name="Traktman P."/>
        </authorList>
    </citation>
    <scope>DISULFIDE BONDS</scope>
    <scope>PHOSPHORYLATION AT SER-85</scope>
    <scope>TOPOLOGY</scope>
    <scope>MUTAGENESIS OF SER-12; SER-25; SER-34; SER-36; SER-38; SER-47; SER-65; CYS-71; SER-77; SER-85 AND SER-88</scope>
</reference>
<comment type="function">
    <text evidence="3 5">Envelope protein which is a major component of the mature virion (MV) membrane. Essential for membrane biogenesis. Is required, together with OPG144, to form bona fide crescents, which can progress to form the immature virion (IV) membrane. OPG140 and OPG144 form a lattice that is stabilized by disulfide bonds and serves as an anchor within the viral membrane to which several other proteins important in virion structure and morphogenesis attach.</text>
</comment>
<comment type="subunit">
    <text evidence="2 4">Homodimer; disulfide-linked. Interacts with OPG144.</text>
</comment>
<comment type="subcellular location">
    <subcellularLocation>
        <location evidence="6">Virion membrane</location>
        <topology evidence="6">Multi-pass membrane protein</topology>
    </subcellularLocation>
    <text evidence="3">Component of the mature virion (MV) membrane.</text>
</comment>
<comment type="PTM">
    <text evidence="7 8">Phosphorylated by viral OPG054 kinase, phosphorylation state is regulated by OPG106 phosphatase.</text>
</comment>
<comment type="similarity">
    <text evidence="6">Belongs to the orthopoxvirus OPG140 family.</text>
</comment>
<sequence>MDMMLMIGNYFSGVLIAGIILLILSCIFAFIDFSKSTSPTRTWKVLSIMAFILGIIITVGMLIYSMWGKHCAPHRVSGVIHTNHSDISMN</sequence>
<evidence type="ECO:0000255" key="1"/>
<evidence type="ECO:0000269" key="2">
    <source>
    </source>
</evidence>
<evidence type="ECO:0000269" key="3">
    <source>
    </source>
</evidence>
<evidence type="ECO:0000269" key="4">
    <source>
    </source>
</evidence>
<evidence type="ECO:0000269" key="5">
    <source>
    </source>
</evidence>
<evidence type="ECO:0000305" key="6"/>
<evidence type="ECO:0000305" key="7">
    <source>
    </source>
</evidence>
<evidence type="ECO:0000305" key="8">
    <source>
    </source>
</evidence>
<organismHost>
    <name type="scientific">Bos taurus</name>
    <name type="common">Bovine</name>
    <dbReference type="NCBI Taxonomy" id="9913"/>
</organismHost>
<dbReference type="EMBL" id="AY243312">
    <property type="protein sequence ID" value="AAO89412.1"/>
    <property type="molecule type" value="Genomic_DNA"/>
</dbReference>
<dbReference type="RefSeq" id="YP_233015.1">
    <property type="nucleotide sequence ID" value="NC_006998.1"/>
</dbReference>
<dbReference type="PDB" id="4N8V">
    <property type="method" value="X-ray"/>
    <property type="resolution" value="2.50 A"/>
    <property type="chains" value="C/F=61-69"/>
</dbReference>
<dbReference type="PDBsum" id="4N8V"/>
<dbReference type="SMR" id="Q76ZQ3"/>
<dbReference type="iPTMnet" id="Q76ZQ3"/>
<dbReference type="DNASU" id="3707531"/>
<dbReference type="GeneID" id="3707531"/>
<dbReference type="KEGG" id="vg:3707531"/>
<dbReference type="EvolutionaryTrace" id="Q76ZQ3"/>
<dbReference type="Proteomes" id="UP000000344">
    <property type="component" value="Genome"/>
</dbReference>
<dbReference type="GO" id="GO:0016020">
    <property type="term" value="C:membrane"/>
    <property type="evidence" value="ECO:0007669"/>
    <property type="project" value="UniProtKB-KW"/>
</dbReference>
<dbReference type="GO" id="GO:0019031">
    <property type="term" value="C:viral envelope"/>
    <property type="evidence" value="ECO:0007669"/>
    <property type="project" value="UniProtKB-KW"/>
</dbReference>
<dbReference type="GO" id="GO:0055036">
    <property type="term" value="C:virion membrane"/>
    <property type="evidence" value="ECO:0007669"/>
    <property type="project" value="UniProtKB-SubCell"/>
</dbReference>
<dbReference type="InterPro" id="IPR008785">
    <property type="entry name" value="Poxvirus_A14"/>
</dbReference>
<dbReference type="Pfam" id="PF05767">
    <property type="entry name" value="Pox_A14"/>
    <property type="match status" value="1"/>
</dbReference>
<proteinExistence type="evidence at protein level"/>
<keyword id="KW-0002">3D-structure</keyword>
<keyword id="KW-0903">Direct protein sequencing</keyword>
<keyword id="KW-1015">Disulfide bond</keyword>
<keyword id="KW-0472">Membrane</keyword>
<keyword id="KW-0597">Phosphoprotein</keyword>
<keyword id="KW-1185">Reference proteome</keyword>
<keyword id="KW-0812">Transmembrane</keyword>
<keyword id="KW-1133">Transmembrane helix</keyword>
<keyword id="KW-0261">Viral envelope protein</keyword>
<keyword id="KW-0946">Virion</keyword>
<name>PG140_VACCW</name>
<feature type="chain" id="PRO_0000414115" description="Virion membrane protein OPG140">
    <location>
        <begin position="1"/>
        <end position="90"/>
    </location>
</feature>
<feature type="topological domain" description="Intravirion" evidence="1">
    <location>
        <begin position="1"/>
        <end position="10"/>
    </location>
</feature>
<feature type="transmembrane region" description="Helical" evidence="1">
    <location>
        <begin position="11"/>
        <end position="31"/>
    </location>
</feature>
<feature type="topological domain" description="Virion surface" evidence="1">
    <location>
        <begin position="32"/>
        <end position="44"/>
    </location>
</feature>
<feature type="transmembrane region" description="Helical" evidence="1">
    <location>
        <begin position="45"/>
        <end position="65"/>
    </location>
</feature>
<feature type="topological domain" description="Intravirion" evidence="1">
    <location>
        <begin position="66"/>
        <end position="90"/>
    </location>
</feature>
<feature type="modified residue" description="Phosphoserine" evidence="4">
    <location>
        <position position="85"/>
    </location>
</feature>
<feature type="disulfide bond" description="Interchain" evidence="4">
    <location>
        <position position="71"/>
    </location>
</feature>
<feature type="mutagenesis site" description="Loss of functionality. No effect on phosphorylation." evidence="4">
    <original>S</original>
    <variation>A</variation>
    <location>
        <position position="12"/>
    </location>
</feature>
<feature type="mutagenesis site" description="No effect on phosphorylation." evidence="4">
    <original>S</original>
    <variation>A</variation>
    <location>
        <position position="25"/>
    </location>
</feature>
<feature type="mutagenesis site" description="No effect on phosphorylation." evidence="4">
    <original>S</original>
    <variation>A</variation>
    <location>
        <position position="34"/>
    </location>
</feature>
<feature type="mutagenesis site" description="No effect on phosphorylation." evidence="4">
    <original>S</original>
    <variation>A</variation>
    <location>
        <position position="36"/>
    </location>
</feature>
<feature type="mutagenesis site" description="No effect on phosphorylation." evidence="4">
    <original>S</original>
    <variation>A</variation>
    <location>
        <position position="38"/>
    </location>
</feature>
<feature type="mutagenesis site" description="No effect on phosphorylation." evidence="4">
    <original>S</original>
    <variation>A</variation>
    <location>
        <position position="47"/>
    </location>
</feature>
<feature type="mutagenesis site" description="No effect on phosphorylation." evidence="4">
    <original>S</original>
    <variation>A</variation>
    <location>
        <position position="65"/>
    </location>
</feature>
<feature type="mutagenesis site" description="Loss of dimerization; loss of viral yield." evidence="4">
    <original>C</original>
    <variation>S</variation>
    <location>
        <position position="71"/>
    </location>
</feature>
<feature type="mutagenesis site" description="No effect on phosphorylation." evidence="4">
    <original>S</original>
    <variation>A</variation>
    <location>
        <position position="77"/>
    </location>
</feature>
<feature type="mutagenesis site" description="Loss of phosphorylation." evidence="4">
    <original>S</original>
    <variation>A</variation>
    <location>
        <position position="85"/>
    </location>
</feature>
<feature type="mutagenesis site" description="No effect on phosphorylation." evidence="4">
    <original>S</original>
    <variation>A</variation>
    <location>
        <position position="88"/>
    </location>
</feature>
<protein>
    <recommendedName>
        <fullName>Virion membrane protein OPG140</fullName>
    </recommendedName>
</protein>